<evidence type="ECO:0000255" key="1">
    <source>
        <dbReference type="HAMAP-Rule" id="MF_00784"/>
    </source>
</evidence>
<sequence>MEKPEQKLLLYKLSDRLFAAIQKNLQLERRQALLVKLGIDTVLNVIPKLIITIILALLLHELVPVLVFMGSFLVLRGFAYGRHLESDLLCTILTAVTFVGVPYLIQFTDGIPELFRFILCLLLTVPIGMFSPAVTRKNPIKSQSLKRALKHKAIITSLVFSFLQFLVSNNLGTIIVVSLLLVFTLIVPLKGGKSDEAENV</sequence>
<organism>
    <name type="scientific">Lactiplantibacillus plantarum (strain ATCC BAA-793 / NCIMB 8826 / WCFS1)</name>
    <name type="common">Lactobacillus plantarum</name>
    <dbReference type="NCBI Taxonomy" id="220668"/>
    <lineage>
        <taxon>Bacteria</taxon>
        <taxon>Bacillati</taxon>
        <taxon>Bacillota</taxon>
        <taxon>Bacilli</taxon>
        <taxon>Lactobacillales</taxon>
        <taxon>Lactobacillaceae</taxon>
        <taxon>Lactiplantibacillus</taxon>
    </lineage>
</organism>
<name>AGRB_LACPL</name>
<feature type="chain" id="PRO_0000168139" description="Putative AgrB-like protein">
    <location>
        <begin position="1"/>
        <end position="200"/>
    </location>
</feature>
<feature type="transmembrane region" description="Helical" evidence="1">
    <location>
        <begin position="49"/>
        <end position="69"/>
    </location>
</feature>
<feature type="transmembrane region" description="Helical" evidence="1">
    <location>
        <begin position="88"/>
        <end position="108"/>
    </location>
</feature>
<feature type="transmembrane region" description="Helical" evidence="1">
    <location>
        <begin position="114"/>
        <end position="134"/>
    </location>
</feature>
<feature type="transmembrane region" description="Helical" evidence="1">
    <location>
        <begin position="148"/>
        <end position="168"/>
    </location>
</feature>
<feature type="transmembrane region" description="Helical" evidence="1">
    <location>
        <begin position="171"/>
        <end position="191"/>
    </location>
</feature>
<accession>Q88S59</accession>
<accession>F9ULD8</accession>
<proteinExistence type="inferred from homology"/>
<keyword id="KW-1003">Cell membrane</keyword>
<keyword id="KW-0378">Hydrolase</keyword>
<keyword id="KW-0472">Membrane</keyword>
<keyword id="KW-0645">Protease</keyword>
<keyword id="KW-0673">Quorum sensing</keyword>
<keyword id="KW-1185">Reference proteome</keyword>
<keyword id="KW-0812">Transmembrane</keyword>
<keyword id="KW-1133">Transmembrane helix</keyword>
<reference key="1">
    <citation type="journal article" date="2003" name="Proc. Natl. Acad. Sci. U.S.A.">
        <title>Complete genome sequence of Lactobacillus plantarum WCFS1.</title>
        <authorList>
            <person name="Kleerebezem M."/>
            <person name="Boekhorst J."/>
            <person name="van Kranenburg R."/>
            <person name="Molenaar D."/>
            <person name="Kuipers O.P."/>
            <person name="Leer R."/>
            <person name="Tarchini R."/>
            <person name="Peters S.A."/>
            <person name="Sandbrink H.M."/>
            <person name="Fiers M.W.E.J."/>
            <person name="Stiekema W."/>
            <person name="Klein Lankhorst R.M."/>
            <person name="Bron P.A."/>
            <person name="Hoffer S.M."/>
            <person name="Nierop Groot M.N."/>
            <person name="Kerkhoven R."/>
            <person name="De Vries M."/>
            <person name="Ursing B."/>
            <person name="De Vos W.M."/>
            <person name="Siezen R.J."/>
        </authorList>
    </citation>
    <scope>NUCLEOTIDE SEQUENCE [LARGE SCALE GENOMIC DNA]</scope>
    <source>
        <strain>ATCC BAA-793 / NCIMB 8826 / WCFS1</strain>
    </source>
</reference>
<reference key="2">
    <citation type="journal article" date="2012" name="J. Bacteriol.">
        <title>Complete resequencing and reannotation of the Lactobacillus plantarum WCFS1 genome.</title>
        <authorList>
            <person name="Siezen R.J."/>
            <person name="Francke C."/>
            <person name="Renckens B."/>
            <person name="Boekhorst J."/>
            <person name="Wels M."/>
            <person name="Kleerebezem M."/>
            <person name="van Hijum S.A."/>
        </authorList>
    </citation>
    <scope>NUCLEOTIDE SEQUENCE [LARGE SCALE GENOMIC DNA]</scope>
    <scope>GENOME REANNOTATION</scope>
    <source>
        <strain>ATCC BAA-793 / NCIMB 8826 / WCFS1</strain>
    </source>
</reference>
<gene>
    <name type="ordered locus">lp_3582</name>
</gene>
<dbReference type="EC" id="3.4.-.-" evidence="1"/>
<dbReference type="EMBL" id="AL935263">
    <property type="protein sequence ID" value="CCC80545.1"/>
    <property type="molecule type" value="Genomic_DNA"/>
</dbReference>
<dbReference type="RefSeq" id="WP_011102234.1">
    <property type="nucleotide sequence ID" value="NC_004567.2"/>
</dbReference>
<dbReference type="RefSeq" id="YP_004891059.1">
    <property type="nucleotide sequence ID" value="NC_004567.2"/>
</dbReference>
<dbReference type="SMR" id="Q88S59"/>
<dbReference type="STRING" id="220668.lp_3582"/>
<dbReference type="EnsemblBacteria" id="CCC80545">
    <property type="protein sequence ID" value="CCC80545"/>
    <property type="gene ID" value="lp_3582"/>
</dbReference>
<dbReference type="KEGG" id="lpl:lp_3582"/>
<dbReference type="eggNOG" id="COG4512">
    <property type="taxonomic scope" value="Bacteria"/>
</dbReference>
<dbReference type="HOGENOM" id="CLU_098969_2_2_9"/>
<dbReference type="OrthoDB" id="2360675at2"/>
<dbReference type="PhylomeDB" id="Q88S59"/>
<dbReference type="Proteomes" id="UP000000432">
    <property type="component" value="Chromosome"/>
</dbReference>
<dbReference type="GO" id="GO:0005886">
    <property type="term" value="C:plasma membrane"/>
    <property type="evidence" value="ECO:0007669"/>
    <property type="project" value="UniProtKB-SubCell"/>
</dbReference>
<dbReference type="GO" id="GO:0008233">
    <property type="term" value="F:peptidase activity"/>
    <property type="evidence" value="ECO:0007669"/>
    <property type="project" value="UniProtKB-UniRule"/>
</dbReference>
<dbReference type="GO" id="GO:0006508">
    <property type="term" value="P:proteolysis"/>
    <property type="evidence" value="ECO:0007669"/>
    <property type="project" value="UniProtKB-KW"/>
</dbReference>
<dbReference type="GO" id="GO:0009372">
    <property type="term" value="P:quorum sensing"/>
    <property type="evidence" value="ECO:0007669"/>
    <property type="project" value="UniProtKB-UniRule"/>
</dbReference>
<dbReference type="HAMAP" id="MF_00784">
    <property type="entry name" value="AgrB"/>
    <property type="match status" value="1"/>
</dbReference>
<dbReference type="InterPro" id="IPR006741">
    <property type="entry name" value="AgrB"/>
</dbReference>
<dbReference type="Pfam" id="PF04647">
    <property type="entry name" value="AgrB"/>
    <property type="match status" value="1"/>
</dbReference>
<dbReference type="SMART" id="SM00793">
    <property type="entry name" value="AgrB"/>
    <property type="match status" value="1"/>
</dbReference>
<comment type="function">
    <text evidence="1">May be involved in the proteolytic processing of a quorum sensing system signal molecule precursor.</text>
</comment>
<comment type="subcellular location">
    <subcellularLocation>
        <location evidence="1">Cell membrane</location>
        <topology evidence="1">Multi-pass membrane protein</topology>
    </subcellularLocation>
</comment>
<comment type="similarity">
    <text evidence="1">Belongs to the AgrB family.</text>
</comment>
<protein>
    <recommendedName>
        <fullName evidence="1">Putative AgrB-like protein</fullName>
        <ecNumber evidence="1">3.4.-.-</ecNumber>
    </recommendedName>
</protein>